<reference key="1">
    <citation type="journal article" date="1996" name="Microbiology">
        <title>Systematic sequencing of the 283 kb 210 degrees-232 degrees region of the Bacillus subtilis genome containing the skin element and many sporulation genes.</title>
        <authorList>
            <person name="Mizuno M."/>
            <person name="Masuda S."/>
            <person name="Takemaru K."/>
            <person name="Hosono S."/>
            <person name="Sato T."/>
            <person name="Takeuchi M."/>
            <person name="Kobayashi Y."/>
        </authorList>
    </citation>
    <scope>NUCLEOTIDE SEQUENCE [GENOMIC DNA]</scope>
    <source>
        <strain>168 / JH642</strain>
    </source>
</reference>
<reference key="2">
    <citation type="journal article" date="1997" name="Nature">
        <title>The complete genome sequence of the Gram-positive bacterium Bacillus subtilis.</title>
        <authorList>
            <person name="Kunst F."/>
            <person name="Ogasawara N."/>
            <person name="Moszer I."/>
            <person name="Albertini A.M."/>
            <person name="Alloni G."/>
            <person name="Azevedo V."/>
            <person name="Bertero M.G."/>
            <person name="Bessieres P."/>
            <person name="Bolotin A."/>
            <person name="Borchert S."/>
            <person name="Borriss R."/>
            <person name="Boursier L."/>
            <person name="Brans A."/>
            <person name="Braun M."/>
            <person name="Brignell S.C."/>
            <person name="Bron S."/>
            <person name="Brouillet S."/>
            <person name="Bruschi C.V."/>
            <person name="Caldwell B."/>
            <person name="Capuano V."/>
            <person name="Carter N.M."/>
            <person name="Choi S.-K."/>
            <person name="Codani J.-J."/>
            <person name="Connerton I.F."/>
            <person name="Cummings N.J."/>
            <person name="Daniel R.A."/>
            <person name="Denizot F."/>
            <person name="Devine K.M."/>
            <person name="Duesterhoeft A."/>
            <person name="Ehrlich S.D."/>
            <person name="Emmerson P.T."/>
            <person name="Entian K.-D."/>
            <person name="Errington J."/>
            <person name="Fabret C."/>
            <person name="Ferrari E."/>
            <person name="Foulger D."/>
            <person name="Fritz C."/>
            <person name="Fujita M."/>
            <person name="Fujita Y."/>
            <person name="Fuma S."/>
            <person name="Galizzi A."/>
            <person name="Galleron N."/>
            <person name="Ghim S.-Y."/>
            <person name="Glaser P."/>
            <person name="Goffeau A."/>
            <person name="Golightly E.J."/>
            <person name="Grandi G."/>
            <person name="Guiseppi G."/>
            <person name="Guy B.J."/>
            <person name="Haga K."/>
            <person name="Haiech J."/>
            <person name="Harwood C.R."/>
            <person name="Henaut A."/>
            <person name="Hilbert H."/>
            <person name="Holsappel S."/>
            <person name="Hosono S."/>
            <person name="Hullo M.-F."/>
            <person name="Itaya M."/>
            <person name="Jones L.-M."/>
            <person name="Joris B."/>
            <person name="Karamata D."/>
            <person name="Kasahara Y."/>
            <person name="Klaerr-Blanchard M."/>
            <person name="Klein C."/>
            <person name="Kobayashi Y."/>
            <person name="Koetter P."/>
            <person name="Koningstein G."/>
            <person name="Krogh S."/>
            <person name="Kumano M."/>
            <person name="Kurita K."/>
            <person name="Lapidus A."/>
            <person name="Lardinois S."/>
            <person name="Lauber J."/>
            <person name="Lazarevic V."/>
            <person name="Lee S.-M."/>
            <person name="Levine A."/>
            <person name="Liu H."/>
            <person name="Masuda S."/>
            <person name="Mauel C."/>
            <person name="Medigue C."/>
            <person name="Medina N."/>
            <person name="Mellado R.P."/>
            <person name="Mizuno M."/>
            <person name="Moestl D."/>
            <person name="Nakai S."/>
            <person name="Noback M."/>
            <person name="Noone D."/>
            <person name="O'Reilly M."/>
            <person name="Ogawa K."/>
            <person name="Ogiwara A."/>
            <person name="Oudega B."/>
            <person name="Park S.-H."/>
            <person name="Parro V."/>
            <person name="Pohl T.M."/>
            <person name="Portetelle D."/>
            <person name="Porwollik S."/>
            <person name="Prescott A.M."/>
            <person name="Presecan E."/>
            <person name="Pujic P."/>
            <person name="Purnelle B."/>
            <person name="Rapoport G."/>
            <person name="Rey M."/>
            <person name="Reynolds S."/>
            <person name="Rieger M."/>
            <person name="Rivolta C."/>
            <person name="Rocha E."/>
            <person name="Roche B."/>
            <person name="Rose M."/>
            <person name="Sadaie Y."/>
            <person name="Sato T."/>
            <person name="Scanlan E."/>
            <person name="Schleich S."/>
            <person name="Schroeter R."/>
            <person name="Scoffone F."/>
            <person name="Sekiguchi J."/>
            <person name="Sekowska A."/>
            <person name="Seror S.J."/>
            <person name="Serror P."/>
            <person name="Shin B.-S."/>
            <person name="Soldo B."/>
            <person name="Sorokin A."/>
            <person name="Tacconi E."/>
            <person name="Takagi T."/>
            <person name="Takahashi H."/>
            <person name="Takemaru K."/>
            <person name="Takeuchi M."/>
            <person name="Tamakoshi A."/>
            <person name="Tanaka T."/>
            <person name="Terpstra P."/>
            <person name="Tognoni A."/>
            <person name="Tosato V."/>
            <person name="Uchiyama S."/>
            <person name="Vandenbol M."/>
            <person name="Vannier F."/>
            <person name="Vassarotti A."/>
            <person name="Viari A."/>
            <person name="Wambutt R."/>
            <person name="Wedler E."/>
            <person name="Wedler H."/>
            <person name="Weitzenegger T."/>
            <person name="Winters P."/>
            <person name="Wipat A."/>
            <person name="Yamamoto H."/>
            <person name="Yamane K."/>
            <person name="Yasumoto K."/>
            <person name="Yata K."/>
            <person name="Yoshida K."/>
            <person name="Yoshikawa H.-F."/>
            <person name="Zumstein E."/>
            <person name="Yoshikawa H."/>
            <person name="Danchin A."/>
        </authorList>
    </citation>
    <scope>NUCLEOTIDE SEQUENCE [LARGE SCALE GENOMIC DNA]</scope>
    <source>
        <strain>168</strain>
    </source>
</reference>
<protein>
    <recommendedName>
        <fullName>Glycine--tRNA ligase alpha subunit</fullName>
        <ecNumber>6.1.1.14</ecNumber>
    </recommendedName>
    <alternativeName>
        <fullName>Glycyl-tRNA synthetase alpha subunit</fullName>
        <shortName>GlyRS</shortName>
    </alternativeName>
</protein>
<sequence length="295" mass="33979">MNIQDMILTLQKHWSSQGCVLMQAYDVEKGAGTMSPYTFLRSIGPEPWKVAYVEPSRRPADGRYGENPNRLYQHHQFQVIIKPSPDNIQELYLDSLRALGIDPLEHDIRFVEDNWENPSLGCAGLGWEVWLDGMEITQFTYFQQVGGLECKPVSVEITYGIERLASYIQDKENVFDLEWTSGFTVKDLFMMAEYEHSVYTFETSDVDMLFQLFSTYEKEAIKQMDNGLVHPAYDYVLKCSHTFNLLDAKGAISVTERTGYIARVRNLARKVAKTYYEEREKLGFPMLKGEGSSHE</sequence>
<keyword id="KW-0030">Aminoacyl-tRNA synthetase</keyword>
<keyword id="KW-0067">ATP-binding</keyword>
<keyword id="KW-0963">Cytoplasm</keyword>
<keyword id="KW-0436">Ligase</keyword>
<keyword id="KW-0547">Nucleotide-binding</keyword>
<keyword id="KW-0648">Protein biosynthesis</keyword>
<keyword id="KW-1185">Reference proteome</keyword>
<feature type="chain" id="PRO_0000072827" description="Glycine--tRNA ligase alpha subunit">
    <location>
        <begin position="1"/>
        <end position="295"/>
    </location>
</feature>
<accession>P54380</accession>
<evidence type="ECO:0000250" key="1"/>
<evidence type="ECO:0000305" key="2"/>
<organism>
    <name type="scientific">Bacillus subtilis (strain 168)</name>
    <dbReference type="NCBI Taxonomy" id="224308"/>
    <lineage>
        <taxon>Bacteria</taxon>
        <taxon>Bacillati</taxon>
        <taxon>Bacillota</taxon>
        <taxon>Bacilli</taxon>
        <taxon>Bacillales</taxon>
        <taxon>Bacillaceae</taxon>
        <taxon>Bacillus</taxon>
    </lineage>
</organism>
<dbReference type="EC" id="6.1.1.14"/>
<dbReference type="EMBL" id="D84432">
    <property type="protein sequence ID" value="BAA12484.1"/>
    <property type="molecule type" value="Genomic_DNA"/>
</dbReference>
<dbReference type="EMBL" id="AL009126">
    <property type="protein sequence ID" value="CAB14456.1"/>
    <property type="molecule type" value="Genomic_DNA"/>
</dbReference>
<dbReference type="PIR" id="A69636">
    <property type="entry name" value="A69636"/>
</dbReference>
<dbReference type="RefSeq" id="NP_390405.1">
    <property type="nucleotide sequence ID" value="NC_000964.3"/>
</dbReference>
<dbReference type="RefSeq" id="WP_003226213.1">
    <property type="nucleotide sequence ID" value="NZ_OZ025638.1"/>
</dbReference>
<dbReference type="SMR" id="P54380"/>
<dbReference type="FunCoup" id="P54380">
    <property type="interactions" value="304"/>
</dbReference>
<dbReference type="STRING" id="224308.BSU25270"/>
<dbReference type="PaxDb" id="224308-BSU25270"/>
<dbReference type="EnsemblBacteria" id="CAB14456">
    <property type="protein sequence ID" value="CAB14456"/>
    <property type="gene ID" value="BSU_25270"/>
</dbReference>
<dbReference type="GeneID" id="76987456"/>
<dbReference type="GeneID" id="937888"/>
<dbReference type="KEGG" id="bsu:BSU25270"/>
<dbReference type="PATRIC" id="fig|224308.179.peg.2746"/>
<dbReference type="eggNOG" id="COG0752">
    <property type="taxonomic scope" value="Bacteria"/>
</dbReference>
<dbReference type="InParanoid" id="P54380"/>
<dbReference type="OrthoDB" id="9802183at2"/>
<dbReference type="PhylomeDB" id="P54380"/>
<dbReference type="BioCyc" id="BSUB:BSU25270-MONOMER"/>
<dbReference type="PRO" id="PR:P54380"/>
<dbReference type="Proteomes" id="UP000001570">
    <property type="component" value="Chromosome"/>
</dbReference>
<dbReference type="GO" id="GO:0005737">
    <property type="term" value="C:cytoplasm"/>
    <property type="evidence" value="ECO:0007669"/>
    <property type="project" value="UniProtKB-SubCell"/>
</dbReference>
<dbReference type="GO" id="GO:0005524">
    <property type="term" value="F:ATP binding"/>
    <property type="evidence" value="ECO:0007669"/>
    <property type="project" value="UniProtKB-UniRule"/>
</dbReference>
<dbReference type="GO" id="GO:0140096">
    <property type="term" value="F:catalytic activity, acting on a protein"/>
    <property type="evidence" value="ECO:0007669"/>
    <property type="project" value="UniProtKB-ARBA"/>
</dbReference>
<dbReference type="GO" id="GO:0004820">
    <property type="term" value="F:glycine-tRNA ligase activity"/>
    <property type="evidence" value="ECO:0007669"/>
    <property type="project" value="UniProtKB-UniRule"/>
</dbReference>
<dbReference type="GO" id="GO:0016740">
    <property type="term" value="F:transferase activity"/>
    <property type="evidence" value="ECO:0007669"/>
    <property type="project" value="UniProtKB-ARBA"/>
</dbReference>
<dbReference type="GO" id="GO:0006426">
    <property type="term" value="P:glycyl-tRNA aminoacylation"/>
    <property type="evidence" value="ECO:0007669"/>
    <property type="project" value="UniProtKB-UniRule"/>
</dbReference>
<dbReference type="CDD" id="cd00733">
    <property type="entry name" value="GlyRS_alpha_core"/>
    <property type="match status" value="1"/>
</dbReference>
<dbReference type="FunFam" id="3.30.930.10:FF:000006">
    <property type="entry name" value="Glycine--tRNA ligase alpha subunit"/>
    <property type="match status" value="1"/>
</dbReference>
<dbReference type="Gene3D" id="3.30.930.10">
    <property type="entry name" value="Bira Bifunctional Protein, Domain 2"/>
    <property type="match status" value="1"/>
</dbReference>
<dbReference type="Gene3D" id="1.20.58.180">
    <property type="entry name" value="Class II aaRS and biotin synthetases, domain 2"/>
    <property type="match status" value="1"/>
</dbReference>
<dbReference type="HAMAP" id="MF_00254">
    <property type="entry name" value="Gly_tRNA_synth_alpha"/>
    <property type="match status" value="1"/>
</dbReference>
<dbReference type="InterPro" id="IPR045864">
    <property type="entry name" value="aa-tRNA-synth_II/BPL/LPL"/>
</dbReference>
<dbReference type="InterPro" id="IPR006194">
    <property type="entry name" value="Gly-tRNA-synth_heterodimer"/>
</dbReference>
<dbReference type="InterPro" id="IPR002310">
    <property type="entry name" value="Gly-tRNA_ligase_asu"/>
</dbReference>
<dbReference type="NCBIfam" id="TIGR00388">
    <property type="entry name" value="glyQ"/>
    <property type="match status" value="1"/>
</dbReference>
<dbReference type="NCBIfam" id="NF006827">
    <property type="entry name" value="PRK09348.1"/>
    <property type="match status" value="1"/>
</dbReference>
<dbReference type="PANTHER" id="PTHR30075:SF2">
    <property type="entry name" value="GLYCINE--TRNA LIGASE, CHLOROPLASTIC_MITOCHONDRIAL 2"/>
    <property type="match status" value="1"/>
</dbReference>
<dbReference type="PANTHER" id="PTHR30075">
    <property type="entry name" value="GLYCYL-TRNA SYNTHETASE"/>
    <property type="match status" value="1"/>
</dbReference>
<dbReference type="Pfam" id="PF02091">
    <property type="entry name" value="tRNA-synt_2e"/>
    <property type="match status" value="1"/>
</dbReference>
<dbReference type="PRINTS" id="PR01044">
    <property type="entry name" value="TRNASYNTHGA"/>
</dbReference>
<dbReference type="SUPFAM" id="SSF55681">
    <property type="entry name" value="Class II aaRS and biotin synthetases"/>
    <property type="match status" value="1"/>
</dbReference>
<dbReference type="PROSITE" id="PS50861">
    <property type="entry name" value="AA_TRNA_LIGASE_II_GLYAB"/>
    <property type="match status" value="1"/>
</dbReference>
<proteinExistence type="inferred from homology"/>
<comment type="catalytic activity">
    <reaction>
        <text>tRNA(Gly) + glycine + ATP = glycyl-tRNA(Gly) + AMP + diphosphate</text>
        <dbReference type="Rhea" id="RHEA:16013"/>
        <dbReference type="Rhea" id="RHEA-COMP:9664"/>
        <dbReference type="Rhea" id="RHEA-COMP:9683"/>
        <dbReference type="ChEBI" id="CHEBI:30616"/>
        <dbReference type="ChEBI" id="CHEBI:33019"/>
        <dbReference type="ChEBI" id="CHEBI:57305"/>
        <dbReference type="ChEBI" id="CHEBI:78442"/>
        <dbReference type="ChEBI" id="CHEBI:78522"/>
        <dbReference type="ChEBI" id="CHEBI:456215"/>
        <dbReference type="EC" id="6.1.1.14"/>
    </reaction>
</comment>
<comment type="subunit">
    <text>Tetramer of two alpha and two beta subunits.</text>
</comment>
<comment type="subcellular location">
    <subcellularLocation>
        <location evidence="1">Cytoplasm</location>
    </subcellularLocation>
</comment>
<comment type="similarity">
    <text evidence="2">Belongs to the class-II aminoacyl-tRNA synthetase family.</text>
</comment>
<gene>
    <name type="primary">glyQ</name>
    <name type="synonym">yqfJ</name>
    <name type="ordered locus">BSU25270</name>
</gene>
<name>SYGA_BACSU</name>